<evidence type="ECO:0000250" key="1"/>
<evidence type="ECO:0000255" key="2">
    <source>
        <dbReference type="PROSITE-ProRule" id="PRU00842"/>
    </source>
</evidence>
<evidence type="ECO:0000255" key="3">
    <source>
        <dbReference type="PROSITE-ProRule" id="PRU00843"/>
    </source>
</evidence>
<comment type="catalytic activity">
    <reaction>
        <text>L-arginine + ATP = N(omega)-phospho-L-arginine + ADP + H(+)</text>
        <dbReference type="Rhea" id="RHEA:22940"/>
        <dbReference type="ChEBI" id="CHEBI:15378"/>
        <dbReference type="ChEBI" id="CHEBI:30616"/>
        <dbReference type="ChEBI" id="CHEBI:32682"/>
        <dbReference type="ChEBI" id="CHEBI:58477"/>
        <dbReference type="ChEBI" id="CHEBI:456216"/>
        <dbReference type="EC" id="2.7.3.3"/>
    </reaction>
</comment>
<comment type="similarity">
    <text evidence="2 3">Belongs to the ATP:guanido phosphotransferase family.</text>
</comment>
<proteinExistence type="evidence at transcript level"/>
<accession>O15989</accession>
<reference key="1">
    <citation type="journal article" date="1997" name="Biochim. Biophys. Acta">
        <title>Evolution of phosphagen kinase V. cDNA-derived amino acid sequences of two molluscan arginine kinases from the chiton Liolophura japonica and the turbanshell Battilus cornutus.</title>
        <authorList>
            <person name="Suzuki T."/>
            <person name="Ban T."/>
            <person name="Furukohri T."/>
        </authorList>
    </citation>
    <scope>NUCLEOTIDE SEQUENCE [MRNA]</scope>
</reference>
<dbReference type="EC" id="2.7.3.3"/>
<dbReference type="EMBL" id="AB008011">
    <property type="protein sequence ID" value="BAA22870.1"/>
    <property type="molecule type" value="mRNA"/>
</dbReference>
<dbReference type="SMR" id="O15989"/>
<dbReference type="GO" id="GO:0005615">
    <property type="term" value="C:extracellular space"/>
    <property type="evidence" value="ECO:0007669"/>
    <property type="project" value="TreeGrafter"/>
</dbReference>
<dbReference type="GO" id="GO:0004054">
    <property type="term" value="F:arginine kinase activity"/>
    <property type="evidence" value="ECO:0007669"/>
    <property type="project" value="UniProtKB-EC"/>
</dbReference>
<dbReference type="GO" id="GO:0005524">
    <property type="term" value="F:ATP binding"/>
    <property type="evidence" value="ECO:0007669"/>
    <property type="project" value="UniProtKB-KW"/>
</dbReference>
<dbReference type="GO" id="GO:0004111">
    <property type="term" value="F:creatine kinase activity"/>
    <property type="evidence" value="ECO:0007669"/>
    <property type="project" value="InterPro"/>
</dbReference>
<dbReference type="GO" id="GO:0046314">
    <property type="term" value="P:phosphocreatine biosynthetic process"/>
    <property type="evidence" value="ECO:0007669"/>
    <property type="project" value="InterPro"/>
</dbReference>
<dbReference type="CDD" id="cd07932">
    <property type="entry name" value="arginine_kinase_like"/>
    <property type="match status" value="1"/>
</dbReference>
<dbReference type="FunFam" id="3.30.590.10:FF:000006">
    <property type="entry name" value="Arginine kinase 1"/>
    <property type="match status" value="1"/>
</dbReference>
<dbReference type="FunFam" id="1.10.135.10:FF:000003">
    <property type="entry name" value="Three-domain arginine kinase"/>
    <property type="match status" value="1"/>
</dbReference>
<dbReference type="Gene3D" id="1.10.135.10">
    <property type="entry name" value="ATP:guanido phosphotransferase, N-terminal domain"/>
    <property type="match status" value="1"/>
</dbReference>
<dbReference type="Gene3D" id="3.30.590.10">
    <property type="entry name" value="Glutamine synthetase/guanido kinase, catalytic domain"/>
    <property type="match status" value="1"/>
</dbReference>
<dbReference type="InterPro" id="IPR000749">
    <property type="entry name" value="ATP-guanido_PTrfase"/>
</dbReference>
<dbReference type="InterPro" id="IPR022415">
    <property type="entry name" value="ATP-guanido_PTrfase_AS"/>
</dbReference>
<dbReference type="InterPro" id="IPR022414">
    <property type="entry name" value="ATP-guanido_PTrfase_cat"/>
</dbReference>
<dbReference type="InterPro" id="IPR022413">
    <property type="entry name" value="ATP-guanido_PTrfase_N"/>
</dbReference>
<dbReference type="InterPro" id="IPR036802">
    <property type="entry name" value="ATP-guanido_PTrfase_N_sf"/>
</dbReference>
<dbReference type="InterPro" id="IPR014746">
    <property type="entry name" value="Gln_synth/guanido_kin_cat_dom"/>
</dbReference>
<dbReference type="PANTHER" id="PTHR11547:SF38">
    <property type="entry name" value="ARGININE KINASE 1-RELATED"/>
    <property type="match status" value="1"/>
</dbReference>
<dbReference type="PANTHER" id="PTHR11547">
    <property type="entry name" value="ARGININE OR CREATINE KINASE"/>
    <property type="match status" value="1"/>
</dbReference>
<dbReference type="Pfam" id="PF00217">
    <property type="entry name" value="ATP-gua_Ptrans"/>
    <property type="match status" value="1"/>
</dbReference>
<dbReference type="Pfam" id="PF02807">
    <property type="entry name" value="ATP-gua_PtransN"/>
    <property type="match status" value="1"/>
</dbReference>
<dbReference type="SUPFAM" id="SSF55931">
    <property type="entry name" value="Glutamine synthetase/guanido kinase"/>
    <property type="match status" value="1"/>
</dbReference>
<dbReference type="SUPFAM" id="SSF48034">
    <property type="entry name" value="Guanido kinase N-terminal domain"/>
    <property type="match status" value="1"/>
</dbReference>
<dbReference type="PROSITE" id="PS00112">
    <property type="entry name" value="PHOSPHAGEN_KINASE"/>
    <property type="match status" value="1"/>
</dbReference>
<dbReference type="PROSITE" id="PS51510">
    <property type="entry name" value="PHOSPHAGEN_KINASE_C"/>
    <property type="match status" value="1"/>
</dbReference>
<dbReference type="PROSITE" id="PS51509">
    <property type="entry name" value="PHOSPHAGEN_KINASE_N"/>
    <property type="match status" value="1"/>
</dbReference>
<keyword id="KW-0067">ATP-binding</keyword>
<keyword id="KW-0418">Kinase</keyword>
<keyword id="KW-0547">Nucleotide-binding</keyword>
<keyword id="KW-0808">Transferase</keyword>
<sequence length="358" mass="39840">MSDADLFSKLDGACDCKSLLKKHCTKERFDAVKDKKTKFGGTIGDCIKSGCLNLDSGVGIYACDPDAYTVFANVLDEVIKDYHKVDKLDHPEPDMGNFEDPGFGDLDPSGDFIVSTRVRVGRSHDSYGFPPVLSKDQIVKMEGDTKAAFEKFSGELAGKYYPLEGMSREESKQLTADHFLFKDDDRFLRDAGGYNNWPSGRGIFFNNNKTFLVWVNEEDHLRLISMQKGGNLAAVYRRLCQAITTMQNSGLSFAKREGLGYLTFCPSNLGTALRASVHMKVPNLAAKADEFKAICEKYNIQARGIHGEHTESEGGVYDLSNKRRLGLTEYQAVMEMKTGVEEILKREKELEGAKGAKK</sequence>
<feature type="chain" id="PRO_0000212006" description="Arginine kinase">
    <location>
        <begin position="1"/>
        <end position="358"/>
    </location>
</feature>
<feature type="domain" description="Phosphagen kinase N-terminal" evidence="2">
    <location>
        <begin position="2"/>
        <end position="84"/>
    </location>
</feature>
<feature type="domain" description="Phosphagen kinase C-terminal" evidence="3">
    <location>
        <begin position="112"/>
        <end position="350"/>
    </location>
</feature>
<feature type="binding site" evidence="1">
    <location>
        <begin position="57"/>
        <end position="61"/>
    </location>
    <ligand>
        <name>substrate</name>
    </ligand>
</feature>
<feature type="binding site" evidence="3">
    <location>
        <begin position="115"/>
        <end position="119"/>
    </location>
    <ligand>
        <name>ATP</name>
        <dbReference type="ChEBI" id="CHEBI:30616"/>
    </ligand>
</feature>
<feature type="binding site" evidence="3">
    <location>
        <position position="178"/>
    </location>
    <ligand>
        <name>ATP</name>
        <dbReference type="ChEBI" id="CHEBI:30616"/>
    </ligand>
</feature>
<feature type="binding site" evidence="1">
    <location>
        <position position="218"/>
    </location>
    <ligand>
        <name>substrate</name>
    </ligand>
</feature>
<feature type="binding site" evidence="3">
    <location>
        <position position="222"/>
    </location>
    <ligand>
        <name>ATP</name>
        <dbReference type="ChEBI" id="CHEBI:30616"/>
    </ligand>
</feature>
<feature type="binding site" evidence="1">
    <location>
        <position position="265"/>
    </location>
    <ligand>
        <name>substrate</name>
    </ligand>
</feature>
<feature type="binding site" evidence="3">
    <location>
        <begin position="274"/>
        <end position="278"/>
    </location>
    <ligand>
        <name>ATP</name>
        <dbReference type="ChEBI" id="CHEBI:30616"/>
    </ligand>
</feature>
<feature type="binding site" evidence="3">
    <location>
        <begin position="303"/>
        <end position="308"/>
    </location>
    <ligand>
        <name>ATP</name>
        <dbReference type="ChEBI" id="CHEBI:30616"/>
    </ligand>
</feature>
<feature type="binding site" evidence="1">
    <location>
        <position position="308"/>
    </location>
    <ligand>
        <name>substrate</name>
    </ligand>
</feature>
<protein>
    <recommendedName>
        <fullName>Arginine kinase</fullName>
        <shortName>AK</shortName>
        <ecNumber>2.7.3.3</ecNumber>
    </recommendedName>
</protein>
<name>KARG_TURCO</name>
<organism>
    <name type="scientific">Turbo cornutus</name>
    <name type="common">Horned turban</name>
    <name type="synonym">Battilus cornutus</name>
    <dbReference type="NCBI Taxonomy" id="63673"/>
    <lineage>
        <taxon>Eukaryota</taxon>
        <taxon>Metazoa</taxon>
        <taxon>Spiralia</taxon>
        <taxon>Lophotrochozoa</taxon>
        <taxon>Mollusca</taxon>
        <taxon>Gastropoda</taxon>
        <taxon>Vetigastropoda</taxon>
        <taxon>Trochida</taxon>
        <taxon>Trochoidea</taxon>
        <taxon>Turbinidae</taxon>
        <taxon>Turbo</taxon>
        <taxon>Batillus</taxon>
    </lineage>
</organism>